<evidence type="ECO:0000250" key="1"/>
<evidence type="ECO:0000305" key="2"/>
<protein>
    <recommendedName>
        <fullName>Serine/threonine-protein phosphatase PP2A catalytic subunit</fullName>
        <ecNumber>3.1.3.16</ecNumber>
    </recommendedName>
</protein>
<dbReference type="EC" id="3.1.3.16"/>
<dbReference type="EMBL" id="X83593">
    <property type="protein sequence ID" value="CAA58573.1"/>
    <property type="status" value="ALT_SEQ"/>
    <property type="molecule type" value="Genomic_DNA"/>
</dbReference>
<dbReference type="EMBL" id="CM002239">
    <property type="protein sequence ID" value="EAA32582.2"/>
    <property type="molecule type" value="Genomic_DNA"/>
</dbReference>
<dbReference type="PIR" id="S60471">
    <property type="entry name" value="S60471"/>
</dbReference>
<dbReference type="RefSeq" id="XP_961818.2">
    <property type="nucleotide sequence ID" value="XM_956725.3"/>
</dbReference>
<dbReference type="SMR" id="P48580"/>
<dbReference type="FunCoup" id="P48580">
    <property type="interactions" value="1008"/>
</dbReference>
<dbReference type="STRING" id="367110.P48580"/>
<dbReference type="PaxDb" id="5141-EFNCRP00000006351"/>
<dbReference type="EnsemblFungi" id="EAA32582">
    <property type="protein sequence ID" value="EAA32582"/>
    <property type="gene ID" value="NCU06630"/>
</dbReference>
<dbReference type="GeneID" id="3877966"/>
<dbReference type="KEGG" id="ncr:NCU06630"/>
<dbReference type="VEuPathDB" id="FungiDB:NCU06630"/>
<dbReference type="HOGENOM" id="CLU_004962_0_5_1"/>
<dbReference type="InParanoid" id="P48580"/>
<dbReference type="OMA" id="EGYNWGQ"/>
<dbReference type="OrthoDB" id="1930084at2759"/>
<dbReference type="Proteomes" id="UP000001805">
    <property type="component" value="Chromosome 4, Linkage Group IV"/>
</dbReference>
<dbReference type="GO" id="GO:0005829">
    <property type="term" value="C:cytosol"/>
    <property type="evidence" value="ECO:0000318"/>
    <property type="project" value="GO_Central"/>
</dbReference>
<dbReference type="GO" id="GO:0046872">
    <property type="term" value="F:metal ion binding"/>
    <property type="evidence" value="ECO:0007669"/>
    <property type="project" value="UniProtKB-KW"/>
</dbReference>
<dbReference type="GO" id="GO:0004722">
    <property type="term" value="F:protein serine/threonine phosphatase activity"/>
    <property type="evidence" value="ECO:0000318"/>
    <property type="project" value="GO_Central"/>
</dbReference>
<dbReference type="GO" id="GO:0000278">
    <property type="term" value="P:mitotic cell cycle"/>
    <property type="evidence" value="ECO:0000318"/>
    <property type="project" value="GO_Central"/>
</dbReference>
<dbReference type="CDD" id="cd07415">
    <property type="entry name" value="MPP_PP2A_PP4_PP6"/>
    <property type="match status" value="1"/>
</dbReference>
<dbReference type="FunFam" id="3.60.21.10:FF:000003">
    <property type="entry name" value="Serine/threonine-protein phosphatase"/>
    <property type="match status" value="1"/>
</dbReference>
<dbReference type="Gene3D" id="3.60.21.10">
    <property type="match status" value="1"/>
</dbReference>
<dbReference type="InterPro" id="IPR004843">
    <property type="entry name" value="Calcineurin-like_PHP_ApaH"/>
</dbReference>
<dbReference type="InterPro" id="IPR029052">
    <property type="entry name" value="Metallo-depent_PP-like"/>
</dbReference>
<dbReference type="InterPro" id="IPR047129">
    <property type="entry name" value="PPA2-like"/>
</dbReference>
<dbReference type="InterPro" id="IPR006186">
    <property type="entry name" value="Ser/Thr-sp_prot-phosphatase"/>
</dbReference>
<dbReference type="PANTHER" id="PTHR45619">
    <property type="entry name" value="SERINE/THREONINE-PROTEIN PHOSPHATASE PP2A-RELATED"/>
    <property type="match status" value="1"/>
</dbReference>
<dbReference type="Pfam" id="PF00149">
    <property type="entry name" value="Metallophos"/>
    <property type="match status" value="1"/>
</dbReference>
<dbReference type="PRINTS" id="PR00114">
    <property type="entry name" value="STPHPHTASE"/>
</dbReference>
<dbReference type="SMART" id="SM00156">
    <property type="entry name" value="PP2Ac"/>
    <property type="match status" value="1"/>
</dbReference>
<dbReference type="SUPFAM" id="SSF56300">
    <property type="entry name" value="Metallo-dependent phosphatases"/>
    <property type="match status" value="1"/>
</dbReference>
<dbReference type="PROSITE" id="PS00125">
    <property type="entry name" value="SER_THR_PHOSPHATASE"/>
    <property type="match status" value="1"/>
</dbReference>
<feature type="chain" id="PRO_0000058870" description="Serine/threonine-protein phosphatase PP2A catalytic subunit">
    <location>
        <begin position="1"/>
        <end position="327"/>
    </location>
</feature>
<feature type="active site" description="Proton donor" evidence="1">
    <location>
        <position position="136"/>
    </location>
</feature>
<feature type="binding site" evidence="1">
    <location>
        <position position="75"/>
    </location>
    <ligand>
        <name>Mn(2+)</name>
        <dbReference type="ChEBI" id="CHEBI:29035"/>
        <label>1</label>
    </ligand>
</feature>
<feature type="binding site" evidence="1">
    <location>
        <position position="77"/>
    </location>
    <ligand>
        <name>Mn(2+)</name>
        <dbReference type="ChEBI" id="CHEBI:29035"/>
        <label>1</label>
    </ligand>
</feature>
<feature type="binding site" evidence="1">
    <location>
        <position position="103"/>
    </location>
    <ligand>
        <name>Mn(2+)</name>
        <dbReference type="ChEBI" id="CHEBI:29035"/>
        <label>1</label>
    </ligand>
</feature>
<feature type="binding site" evidence="1">
    <location>
        <position position="103"/>
    </location>
    <ligand>
        <name>Mn(2+)</name>
        <dbReference type="ChEBI" id="CHEBI:29035"/>
        <label>2</label>
    </ligand>
</feature>
<feature type="binding site" evidence="1">
    <location>
        <position position="135"/>
    </location>
    <ligand>
        <name>Mn(2+)</name>
        <dbReference type="ChEBI" id="CHEBI:29035"/>
        <label>2</label>
    </ligand>
</feature>
<feature type="binding site" evidence="1">
    <location>
        <position position="185"/>
    </location>
    <ligand>
        <name>Mn(2+)</name>
        <dbReference type="ChEBI" id="CHEBI:29035"/>
        <label>2</label>
    </ligand>
</feature>
<feature type="binding site" evidence="1">
    <location>
        <position position="259"/>
    </location>
    <ligand>
        <name>Mn(2+)</name>
        <dbReference type="ChEBI" id="CHEBI:29035"/>
        <label>2</label>
    </ligand>
</feature>
<feature type="modified residue" description="Leucine methyl ester" evidence="1">
    <location>
        <position position="327"/>
    </location>
</feature>
<accession>P48580</accession>
<accession>Q7RVE8</accession>
<organism>
    <name type="scientific">Neurospora crassa (strain ATCC 24698 / 74-OR23-1A / CBS 708.71 / DSM 1257 / FGSC 987)</name>
    <dbReference type="NCBI Taxonomy" id="367110"/>
    <lineage>
        <taxon>Eukaryota</taxon>
        <taxon>Fungi</taxon>
        <taxon>Dikarya</taxon>
        <taxon>Ascomycota</taxon>
        <taxon>Pezizomycotina</taxon>
        <taxon>Sordariomycetes</taxon>
        <taxon>Sordariomycetidae</taxon>
        <taxon>Sordariales</taxon>
        <taxon>Sordariaceae</taxon>
        <taxon>Neurospora</taxon>
    </lineage>
</organism>
<reference key="1">
    <citation type="journal article" date="1995" name="Curr. Genet.">
        <title>Inactivation of a single-2A phosphoprotein phosphatase is lethal in Neurospora crassa.</title>
        <authorList>
            <person name="Yatzkan E."/>
            <person name="Yarden O."/>
        </authorList>
    </citation>
    <scope>NUCLEOTIDE SEQUENCE [GENOMIC DNA]</scope>
    <source>
        <strain>ATCC 24698 / 74-OR23-1A / CBS 708.71 / DSM 1257 / FGSC 987</strain>
    </source>
</reference>
<reference key="2">
    <citation type="submission" date="2003-04" db="UniProtKB">
        <authorList>
            <person name="Yarden O."/>
        </authorList>
    </citation>
    <scope>SEQUENCE REVISION TO C-TERMINUS</scope>
</reference>
<reference key="3">
    <citation type="journal article" date="2003" name="Nature">
        <title>The genome sequence of the filamentous fungus Neurospora crassa.</title>
        <authorList>
            <person name="Galagan J.E."/>
            <person name="Calvo S.E."/>
            <person name="Borkovich K.A."/>
            <person name="Selker E.U."/>
            <person name="Read N.D."/>
            <person name="Jaffe D.B."/>
            <person name="FitzHugh W."/>
            <person name="Ma L.-J."/>
            <person name="Smirnov S."/>
            <person name="Purcell S."/>
            <person name="Rehman B."/>
            <person name="Elkins T."/>
            <person name="Engels R."/>
            <person name="Wang S."/>
            <person name="Nielsen C.B."/>
            <person name="Butler J."/>
            <person name="Endrizzi M."/>
            <person name="Qui D."/>
            <person name="Ianakiev P."/>
            <person name="Bell-Pedersen D."/>
            <person name="Nelson M.A."/>
            <person name="Werner-Washburne M."/>
            <person name="Selitrennikoff C.P."/>
            <person name="Kinsey J.A."/>
            <person name="Braun E.L."/>
            <person name="Zelter A."/>
            <person name="Schulte U."/>
            <person name="Kothe G.O."/>
            <person name="Jedd G."/>
            <person name="Mewes H.-W."/>
            <person name="Staben C."/>
            <person name="Marcotte E."/>
            <person name="Greenberg D."/>
            <person name="Roy A."/>
            <person name="Foley K."/>
            <person name="Naylor J."/>
            <person name="Stange-Thomann N."/>
            <person name="Barrett R."/>
            <person name="Gnerre S."/>
            <person name="Kamal M."/>
            <person name="Kamvysselis M."/>
            <person name="Mauceli E.W."/>
            <person name="Bielke C."/>
            <person name="Rudd S."/>
            <person name="Frishman D."/>
            <person name="Krystofova S."/>
            <person name="Rasmussen C."/>
            <person name="Metzenberg R.L."/>
            <person name="Perkins D.D."/>
            <person name="Kroken S."/>
            <person name="Cogoni C."/>
            <person name="Macino G."/>
            <person name="Catcheside D.E.A."/>
            <person name="Li W."/>
            <person name="Pratt R.J."/>
            <person name="Osmani S.A."/>
            <person name="DeSouza C.P.C."/>
            <person name="Glass N.L."/>
            <person name="Orbach M.J."/>
            <person name="Berglund J.A."/>
            <person name="Voelker R."/>
            <person name="Yarden O."/>
            <person name="Plamann M."/>
            <person name="Seiler S."/>
            <person name="Dunlap J.C."/>
            <person name="Radford A."/>
            <person name="Aramayo R."/>
            <person name="Natvig D.O."/>
            <person name="Alex L.A."/>
            <person name="Mannhaupt G."/>
            <person name="Ebbole D.J."/>
            <person name="Freitag M."/>
            <person name="Paulsen I."/>
            <person name="Sachs M.S."/>
            <person name="Lander E.S."/>
            <person name="Nusbaum C."/>
            <person name="Birren B.W."/>
        </authorList>
    </citation>
    <scope>NUCLEOTIDE SEQUENCE [LARGE SCALE GENOMIC DNA]</scope>
    <source>
        <strain>ATCC 24698 / 74-OR23-1A / CBS 708.71 / DSM 1257 / FGSC 987</strain>
    </source>
</reference>
<sequence length="327" mass="37291">MDTNMEDVGRVPAELTSSNFEPTTIPTLDGWIESLMNCKQLAESDVQRLCEKAREVLQDESNVQPVKCPVTVCGDIHGQFHDLMELFKIGGSCPDTNYLFMGDYVDRGYYSVETVTLLVALKIRYPNRITILRGNHESRQITQVYGFYDECLRKYGNANVWKYFTDLFDYLPLTALIDNQIFCLHGGLSPSIDTLDNIRALDRIQEVPHEGPMCDLLWSDPDDRCGWGISPRGAGYTFGQDISEAFNHNNGLTLIARAHQLVMEGYNWSQDRNVVTIFSAPNYCYRCGNQAAIMEIDEHLKYTFLQFDPCPRAGEPMVSRRTPDYFL</sequence>
<name>PP2A1_NEUCR</name>
<keyword id="KW-0378">Hydrolase</keyword>
<keyword id="KW-0464">Manganese</keyword>
<keyword id="KW-0479">Metal-binding</keyword>
<keyword id="KW-0488">Methylation</keyword>
<keyword id="KW-0904">Protein phosphatase</keyword>
<keyword id="KW-1185">Reference proteome</keyword>
<comment type="catalytic activity">
    <reaction>
        <text>O-phospho-L-seryl-[protein] + H2O = L-seryl-[protein] + phosphate</text>
        <dbReference type="Rhea" id="RHEA:20629"/>
        <dbReference type="Rhea" id="RHEA-COMP:9863"/>
        <dbReference type="Rhea" id="RHEA-COMP:11604"/>
        <dbReference type="ChEBI" id="CHEBI:15377"/>
        <dbReference type="ChEBI" id="CHEBI:29999"/>
        <dbReference type="ChEBI" id="CHEBI:43474"/>
        <dbReference type="ChEBI" id="CHEBI:83421"/>
        <dbReference type="EC" id="3.1.3.16"/>
    </reaction>
</comment>
<comment type="catalytic activity">
    <reaction>
        <text>O-phospho-L-threonyl-[protein] + H2O = L-threonyl-[protein] + phosphate</text>
        <dbReference type="Rhea" id="RHEA:47004"/>
        <dbReference type="Rhea" id="RHEA-COMP:11060"/>
        <dbReference type="Rhea" id="RHEA-COMP:11605"/>
        <dbReference type="ChEBI" id="CHEBI:15377"/>
        <dbReference type="ChEBI" id="CHEBI:30013"/>
        <dbReference type="ChEBI" id="CHEBI:43474"/>
        <dbReference type="ChEBI" id="CHEBI:61977"/>
        <dbReference type="EC" id="3.1.3.16"/>
    </reaction>
</comment>
<comment type="cofactor">
    <cofactor evidence="1">
        <name>Mn(2+)</name>
        <dbReference type="ChEBI" id="CHEBI:29035"/>
    </cofactor>
    <text evidence="1">Binds 2 manganese ions per subunit.</text>
</comment>
<comment type="similarity">
    <text evidence="2">Belongs to the PPP phosphatase family. PP-2A subfamily.</text>
</comment>
<comment type="sequence caution" evidence="2">
    <conflict type="erroneous gene model prediction">
        <sequence resource="EMBL-CDS" id="CAA58573"/>
    </conflict>
</comment>
<gene>
    <name type="primary">pph-1</name>
    <name type="ORF">NCU06630</name>
</gene>
<proteinExistence type="inferred from homology"/>